<keyword id="KW-0028">Amino-acid biosynthesis</keyword>
<keyword id="KW-0055">Arginine biosynthesis</keyword>
<keyword id="KW-0067">ATP-binding</keyword>
<keyword id="KW-0436">Ligase</keyword>
<keyword id="KW-0460">Magnesium</keyword>
<keyword id="KW-0464">Manganese</keyword>
<keyword id="KW-0479">Metal-binding</keyword>
<keyword id="KW-0547">Nucleotide-binding</keyword>
<keyword id="KW-0665">Pyrimidine biosynthesis</keyword>
<keyword id="KW-0677">Repeat</keyword>
<evidence type="ECO:0000255" key="1">
    <source>
        <dbReference type="HAMAP-Rule" id="MF_01210"/>
    </source>
</evidence>
<comment type="function">
    <text evidence="1">Large subunit of the glutamine-dependent carbamoyl phosphate synthetase (CPSase). CPSase catalyzes the formation of carbamoyl phosphate from the ammonia moiety of glutamine, carbonate, and phosphate donated by ATP, constituting the first step of 2 biosynthetic pathways, one leading to arginine and/or urea and the other to pyrimidine nucleotides. The large subunit (synthetase) binds the substrates ammonia (free or transferred from glutamine from the small subunit), hydrogencarbonate and ATP and carries out an ATP-coupled ligase reaction, activating hydrogencarbonate by forming carboxy phosphate which reacts with ammonia to form carbamoyl phosphate.</text>
</comment>
<comment type="catalytic activity">
    <reaction evidence="1">
        <text>hydrogencarbonate + L-glutamine + 2 ATP + H2O = carbamoyl phosphate + L-glutamate + 2 ADP + phosphate + 2 H(+)</text>
        <dbReference type="Rhea" id="RHEA:18633"/>
        <dbReference type="ChEBI" id="CHEBI:15377"/>
        <dbReference type="ChEBI" id="CHEBI:15378"/>
        <dbReference type="ChEBI" id="CHEBI:17544"/>
        <dbReference type="ChEBI" id="CHEBI:29985"/>
        <dbReference type="ChEBI" id="CHEBI:30616"/>
        <dbReference type="ChEBI" id="CHEBI:43474"/>
        <dbReference type="ChEBI" id="CHEBI:58228"/>
        <dbReference type="ChEBI" id="CHEBI:58359"/>
        <dbReference type="ChEBI" id="CHEBI:456216"/>
        <dbReference type="EC" id="6.3.5.5"/>
    </reaction>
</comment>
<comment type="catalytic activity">
    <molecule>Carbamoyl phosphate synthase large chain</molecule>
    <reaction evidence="1">
        <text>hydrogencarbonate + NH4(+) + 2 ATP = carbamoyl phosphate + 2 ADP + phosphate + 2 H(+)</text>
        <dbReference type="Rhea" id="RHEA:18029"/>
        <dbReference type="ChEBI" id="CHEBI:15378"/>
        <dbReference type="ChEBI" id="CHEBI:17544"/>
        <dbReference type="ChEBI" id="CHEBI:28938"/>
        <dbReference type="ChEBI" id="CHEBI:30616"/>
        <dbReference type="ChEBI" id="CHEBI:43474"/>
        <dbReference type="ChEBI" id="CHEBI:58228"/>
        <dbReference type="ChEBI" id="CHEBI:456216"/>
        <dbReference type="EC" id="6.3.4.16"/>
    </reaction>
</comment>
<comment type="cofactor">
    <cofactor evidence="1">
        <name>Mg(2+)</name>
        <dbReference type="ChEBI" id="CHEBI:18420"/>
    </cofactor>
    <cofactor evidence="1">
        <name>Mn(2+)</name>
        <dbReference type="ChEBI" id="CHEBI:29035"/>
    </cofactor>
    <text evidence="1">Binds 4 Mg(2+) or Mn(2+) ions per subunit.</text>
</comment>
<comment type="pathway">
    <text evidence="1">Amino-acid biosynthesis; L-arginine biosynthesis; carbamoyl phosphate from bicarbonate: step 1/1.</text>
</comment>
<comment type="pathway">
    <text evidence="1">Pyrimidine metabolism; UMP biosynthesis via de novo pathway; (S)-dihydroorotate from bicarbonate: step 1/3.</text>
</comment>
<comment type="subunit">
    <text evidence="1">Composed of two chains; the small (or glutamine) chain promotes the hydrolysis of glutamine to ammonia, which is used by the large (or ammonia) chain to synthesize carbamoyl phosphate. Tetramer of heterodimers (alpha,beta)4.</text>
</comment>
<comment type="domain">
    <text evidence="1">The large subunit is composed of 2 ATP-grasp domains that are involved in binding the 2 ATP molecules needed for carbamoyl phosphate synthesis. The N-terminal ATP-grasp domain (referred to as the carboxyphosphate synthetic component) catalyzes the ATP-dependent phosphorylation of hydrogencarbonate to carboxyphosphate and the subsequent nucleophilic attack by ammonia to form a carbamate intermediate. The C-terminal ATP-grasp domain (referred to as the carbamoyl phosphate synthetic component) then catalyzes the phosphorylation of carbamate with the second ATP to form the end product carbamoyl phosphate. The reactive and unstable enzyme intermediates are sequentially channeled from one active site to the next through the interior of the protein over a distance of at least 96 A.</text>
</comment>
<comment type="similarity">
    <text evidence="1">Belongs to the CarB family.</text>
</comment>
<name>CARB_VIBPA</name>
<sequence>MPKRTDIQSILILGAGPIVIGQACEFDYSGAQACKALREEGYRVILVNSNPATIMTDPEMADATYIEPIQWEVVRKIIEKERPDAVLPTMGGQTALNCALDLEKHGVLAEFGVEMIGATADAIDKAEDRSRFDKAMKSIGLECPRADTAKTMEEAYKVLDMVGFPCIIRPSFTMGGTGGGIAYNKEEFEEICRRGLDLSPTNELLIDESLIGWKEYEMEVVRDKADNCIIVCSIENFDPMGIHTGDSITVAPAQTLTDKEYQLMRNASLAVLREIGVETGGSNVQFGINPKDGRMVIIEMNPRVSRSSALASKATGFPIAKIAAKLAVGFTLDELQNDITGGATPASFEPTIDYVVTKIPRFNFEKFAGANDRLTTQMKSVGEVMAIGRNQQESLHKALRGLEVGATGFDEMVDLDAPDALTKIRHELKEAGAERIWYIADAFRAGMSVDGVFNLTNIDRWFLVQIEELVKLEEQVKAGGFAGLTEEVLRQMKRKGFSDARLSKLLGVAESEIRRLRDQFDIHPVYKRVDTCAAEFSSDTAYMYSSYDEECEANPTDKDKIMVLGGGPNRIGQGIEFDYCCVHASLALREDGYETIMVNCNPETVSTDYDTSDRLYFEPVTLEDVLSIARVEKPKGVIVQYGGQTPLKLARALEAAGVPIIGTSPDAIDRAEDRERFQAAVERLGLLQPQNATVTAMEQAVEKSREIGFPLVVRPSYVLGGRAMEIVYDEQDLRRYFNEAVSVSNESPVLLDRFLDDATEVDIDAICDGERVVIGGIMEHIEQAGVHSGDSACSLPAYTLSQEIQDKMREQVEKLAFELGVRGLMNTQFAVKDNEVYLIEVNPRAARTVPFVSKATGAPLAKIAARVMAGQSLESQGFTKEIIPPYYSVKEVVLPFNKFPGVDPLLGPEMRSTGEVMGVGATFAEAYAKAELGCGSVYPEGGRALLSVREGDKQRVVDLASKLVKLGYQLDATHGTAVILGEAGINPRLVNKVHEGRPHILDRIKNNEYTYIVNTAAGRQAIEDSKVLRRGALAEKVNYTTTLNAAFATCMSHTADAKASVTSVQELHAKVKASLEA</sequence>
<dbReference type="EC" id="6.3.4.16" evidence="1"/>
<dbReference type="EC" id="6.3.5.5" evidence="1"/>
<dbReference type="EMBL" id="BA000031">
    <property type="protein sequence ID" value="BAC58734.1"/>
    <property type="molecule type" value="Genomic_DNA"/>
</dbReference>
<dbReference type="RefSeq" id="NP_796850.1">
    <property type="nucleotide sequence ID" value="NC_004603.1"/>
</dbReference>
<dbReference type="RefSeq" id="WP_005461228.1">
    <property type="nucleotide sequence ID" value="NC_004603.1"/>
</dbReference>
<dbReference type="SMR" id="Q87SF3"/>
<dbReference type="GeneID" id="1187939"/>
<dbReference type="KEGG" id="vpa:VP0471"/>
<dbReference type="PATRIC" id="fig|223926.6.peg.449"/>
<dbReference type="eggNOG" id="COG0458">
    <property type="taxonomic scope" value="Bacteria"/>
</dbReference>
<dbReference type="HOGENOM" id="CLU_000513_1_0_6"/>
<dbReference type="UniPathway" id="UPA00068">
    <property type="reaction ID" value="UER00171"/>
</dbReference>
<dbReference type="UniPathway" id="UPA00070">
    <property type="reaction ID" value="UER00115"/>
</dbReference>
<dbReference type="Proteomes" id="UP000002493">
    <property type="component" value="Chromosome 1"/>
</dbReference>
<dbReference type="GO" id="GO:0005737">
    <property type="term" value="C:cytoplasm"/>
    <property type="evidence" value="ECO:0007669"/>
    <property type="project" value="TreeGrafter"/>
</dbReference>
<dbReference type="GO" id="GO:0005524">
    <property type="term" value="F:ATP binding"/>
    <property type="evidence" value="ECO:0007669"/>
    <property type="project" value="UniProtKB-UniRule"/>
</dbReference>
<dbReference type="GO" id="GO:0004087">
    <property type="term" value="F:carbamoyl-phosphate synthase (ammonia) activity"/>
    <property type="evidence" value="ECO:0007669"/>
    <property type="project" value="RHEA"/>
</dbReference>
<dbReference type="GO" id="GO:0004088">
    <property type="term" value="F:carbamoyl-phosphate synthase (glutamine-hydrolyzing) activity"/>
    <property type="evidence" value="ECO:0007669"/>
    <property type="project" value="UniProtKB-UniRule"/>
</dbReference>
<dbReference type="GO" id="GO:0046872">
    <property type="term" value="F:metal ion binding"/>
    <property type="evidence" value="ECO:0007669"/>
    <property type="project" value="UniProtKB-KW"/>
</dbReference>
<dbReference type="GO" id="GO:0044205">
    <property type="term" value="P:'de novo' UMP biosynthetic process"/>
    <property type="evidence" value="ECO:0007669"/>
    <property type="project" value="UniProtKB-UniRule"/>
</dbReference>
<dbReference type="GO" id="GO:0006541">
    <property type="term" value="P:glutamine metabolic process"/>
    <property type="evidence" value="ECO:0007669"/>
    <property type="project" value="TreeGrafter"/>
</dbReference>
<dbReference type="GO" id="GO:0006526">
    <property type="term" value="P:L-arginine biosynthetic process"/>
    <property type="evidence" value="ECO:0007669"/>
    <property type="project" value="UniProtKB-UniRule"/>
</dbReference>
<dbReference type="CDD" id="cd01424">
    <property type="entry name" value="MGS_CPS_II"/>
    <property type="match status" value="1"/>
</dbReference>
<dbReference type="FunFam" id="1.10.1030.10:FF:000002">
    <property type="entry name" value="Carbamoyl-phosphate synthase large chain"/>
    <property type="match status" value="1"/>
</dbReference>
<dbReference type="FunFam" id="3.30.1490.20:FF:000001">
    <property type="entry name" value="Carbamoyl-phosphate synthase large chain"/>
    <property type="match status" value="1"/>
</dbReference>
<dbReference type="FunFam" id="3.30.470.20:FF:000007">
    <property type="entry name" value="Carbamoyl-phosphate synthase large chain"/>
    <property type="match status" value="1"/>
</dbReference>
<dbReference type="FunFam" id="3.30.470.20:FF:000013">
    <property type="entry name" value="Carbamoyl-phosphate synthase large chain"/>
    <property type="match status" value="1"/>
</dbReference>
<dbReference type="FunFam" id="3.40.50.1380:FF:000004">
    <property type="entry name" value="Carbamoyl-phosphate synthase large chain"/>
    <property type="match status" value="1"/>
</dbReference>
<dbReference type="FunFam" id="3.40.50.20:FF:000001">
    <property type="entry name" value="Carbamoyl-phosphate synthase large chain"/>
    <property type="match status" value="1"/>
</dbReference>
<dbReference type="FunFam" id="3.40.50.20:FF:000003">
    <property type="entry name" value="Carbamoyl-phosphate synthase large chain"/>
    <property type="match status" value="1"/>
</dbReference>
<dbReference type="Gene3D" id="3.40.50.20">
    <property type="match status" value="2"/>
</dbReference>
<dbReference type="Gene3D" id="3.30.470.20">
    <property type="entry name" value="ATP-grasp fold, B domain"/>
    <property type="match status" value="2"/>
</dbReference>
<dbReference type="Gene3D" id="1.10.1030.10">
    <property type="entry name" value="Carbamoyl-phosphate synthetase, large subunit oligomerisation domain"/>
    <property type="match status" value="1"/>
</dbReference>
<dbReference type="Gene3D" id="3.40.50.1380">
    <property type="entry name" value="Methylglyoxal synthase-like domain"/>
    <property type="match status" value="1"/>
</dbReference>
<dbReference type="HAMAP" id="MF_01210_A">
    <property type="entry name" value="CPSase_L_chain_A"/>
    <property type="match status" value="1"/>
</dbReference>
<dbReference type="HAMAP" id="MF_01210_B">
    <property type="entry name" value="CPSase_L_chain_B"/>
    <property type="match status" value="1"/>
</dbReference>
<dbReference type="InterPro" id="IPR011761">
    <property type="entry name" value="ATP-grasp"/>
</dbReference>
<dbReference type="InterPro" id="IPR006275">
    <property type="entry name" value="CarbamoylP_synth_lsu"/>
</dbReference>
<dbReference type="InterPro" id="IPR005480">
    <property type="entry name" value="CarbamoylP_synth_lsu_oligo"/>
</dbReference>
<dbReference type="InterPro" id="IPR036897">
    <property type="entry name" value="CarbamoylP_synth_lsu_oligo_sf"/>
</dbReference>
<dbReference type="InterPro" id="IPR005479">
    <property type="entry name" value="CbamoylP_synth_lsu-like_ATP-bd"/>
</dbReference>
<dbReference type="InterPro" id="IPR005483">
    <property type="entry name" value="CbamoylP_synth_lsu_CPSase_dom"/>
</dbReference>
<dbReference type="InterPro" id="IPR011607">
    <property type="entry name" value="MGS-like_dom"/>
</dbReference>
<dbReference type="InterPro" id="IPR036914">
    <property type="entry name" value="MGS-like_dom_sf"/>
</dbReference>
<dbReference type="InterPro" id="IPR033937">
    <property type="entry name" value="MGS_CPS_CarB"/>
</dbReference>
<dbReference type="InterPro" id="IPR016185">
    <property type="entry name" value="PreATP-grasp_dom_sf"/>
</dbReference>
<dbReference type="NCBIfam" id="TIGR01369">
    <property type="entry name" value="CPSaseII_lrg"/>
    <property type="match status" value="1"/>
</dbReference>
<dbReference type="NCBIfam" id="NF003671">
    <property type="entry name" value="PRK05294.1"/>
    <property type="match status" value="1"/>
</dbReference>
<dbReference type="NCBIfam" id="NF009455">
    <property type="entry name" value="PRK12815.1"/>
    <property type="match status" value="1"/>
</dbReference>
<dbReference type="PANTHER" id="PTHR11405:SF53">
    <property type="entry name" value="CARBAMOYL-PHOSPHATE SYNTHASE [AMMONIA], MITOCHONDRIAL"/>
    <property type="match status" value="1"/>
</dbReference>
<dbReference type="PANTHER" id="PTHR11405">
    <property type="entry name" value="CARBAMOYLTRANSFERASE FAMILY MEMBER"/>
    <property type="match status" value="1"/>
</dbReference>
<dbReference type="Pfam" id="PF02786">
    <property type="entry name" value="CPSase_L_D2"/>
    <property type="match status" value="2"/>
</dbReference>
<dbReference type="Pfam" id="PF02787">
    <property type="entry name" value="CPSase_L_D3"/>
    <property type="match status" value="1"/>
</dbReference>
<dbReference type="Pfam" id="PF02142">
    <property type="entry name" value="MGS"/>
    <property type="match status" value="1"/>
</dbReference>
<dbReference type="PRINTS" id="PR00098">
    <property type="entry name" value="CPSASE"/>
</dbReference>
<dbReference type="SMART" id="SM01096">
    <property type="entry name" value="CPSase_L_D3"/>
    <property type="match status" value="1"/>
</dbReference>
<dbReference type="SMART" id="SM00851">
    <property type="entry name" value="MGS"/>
    <property type="match status" value="1"/>
</dbReference>
<dbReference type="SUPFAM" id="SSF48108">
    <property type="entry name" value="Carbamoyl phosphate synthetase, large subunit connection domain"/>
    <property type="match status" value="1"/>
</dbReference>
<dbReference type="SUPFAM" id="SSF56059">
    <property type="entry name" value="Glutathione synthetase ATP-binding domain-like"/>
    <property type="match status" value="2"/>
</dbReference>
<dbReference type="SUPFAM" id="SSF52335">
    <property type="entry name" value="Methylglyoxal synthase-like"/>
    <property type="match status" value="1"/>
</dbReference>
<dbReference type="SUPFAM" id="SSF52440">
    <property type="entry name" value="PreATP-grasp domain"/>
    <property type="match status" value="2"/>
</dbReference>
<dbReference type="PROSITE" id="PS50975">
    <property type="entry name" value="ATP_GRASP"/>
    <property type="match status" value="2"/>
</dbReference>
<dbReference type="PROSITE" id="PS00866">
    <property type="entry name" value="CPSASE_1"/>
    <property type="match status" value="2"/>
</dbReference>
<dbReference type="PROSITE" id="PS00867">
    <property type="entry name" value="CPSASE_2"/>
    <property type="match status" value="2"/>
</dbReference>
<dbReference type="PROSITE" id="PS51855">
    <property type="entry name" value="MGS"/>
    <property type="match status" value="1"/>
</dbReference>
<reference key="1">
    <citation type="journal article" date="2003" name="Lancet">
        <title>Genome sequence of Vibrio parahaemolyticus: a pathogenic mechanism distinct from that of V. cholerae.</title>
        <authorList>
            <person name="Makino K."/>
            <person name="Oshima K."/>
            <person name="Kurokawa K."/>
            <person name="Yokoyama K."/>
            <person name="Uda T."/>
            <person name="Tagomori K."/>
            <person name="Iijima Y."/>
            <person name="Najima M."/>
            <person name="Nakano M."/>
            <person name="Yamashita A."/>
            <person name="Kubota Y."/>
            <person name="Kimura S."/>
            <person name="Yasunaga T."/>
            <person name="Honda T."/>
            <person name="Shinagawa H."/>
            <person name="Hattori M."/>
            <person name="Iida T."/>
        </authorList>
    </citation>
    <scope>NUCLEOTIDE SEQUENCE [LARGE SCALE GENOMIC DNA]</scope>
    <source>
        <strain>RIMD 2210633</strain>
    </source>
</reference>
<accession>Q87SF3</accession>
<protein>
    <recommendedName>
        <fullName evidence="1">Carbamoyl phosphate synthase large chain</fullName>
        <ecNumber evidence="1">6.3.4.16</ecNumber>
        <ecNumber evidence="1">6.3.5.5</ecNumber>
    </recommendedName>
    <alternativeName>
        <fullName evidence="1">Carbamoyl phosphate synthetase ammonia chain</fullName>
    </alternativeName>
</protein>
<organism>
    <name type="scientific">Vibrio parahaemolyticus serotype O3:K6 (strain RIMD 2210633)</name>
    <dbReference type="NCBI Taxonomy" id="223926"/>
    <lineage>
        <taxon>Bacteria</taxon>
        <taxon>Pseudomonadati</taxon>
        <taxon>Pseudomonadota</taxon>
        <taxon>Gammaproteobacteria</taxon>
        <taxon>Vibrionales</taxon>
        <taxon>Vibrionaceae</taxon>
        <taxon>Vibrio</taxon>
    </lineage>
</organism>
<gene>
    <name evidence="1" type="primary">carB</name>
    <name type="ordered locus">VP0471</name>
</gene>
<proteinExistence type="inferred from homology"/>
<feature type="chain" id="PRO_0000145062" description="Carbamoyl phosphate synthase large chain">
    <location>
        <begin position="1"/>
        <end position="1077"/>
    </location>
</feature>
<feature type="domain" description="ATP-grasp 1" evidence="1">
    <location>
        <begin position="133"/>
        <end position="328"/>
    </location>
</feature>
<feature type="domain" description="ATP-grasp 2" evidence="1">
    <location>
        <begin position="678"/>
        <end position="869"/>
    </location>
</feature>
<feature type="domain" description="MGS-like" evidence="1">
    <location>
        <begin position="936"/>
        <end position="1077"/>
    </location>
</feature>
<feature type="region of interest" description="Carboxyphosphate synthetic domain" evidence="1">
    <location>
        <begin position="1"/>
        <end position="403"/>
    </location>
</feature>
<feature type="region of interest" description="Oligomerization domain" evidence="1">
    <location>
        <begin position="404"/>
        <end position="553"/>
    </location>
</feature>
<feature type="region of interest" description="Carbamoyl phosphate synthetic domain" evidence="1">
    <location>
        <begin position="554"/>
        <end position="935"/>
    </location>
</feature>
<feature type="region of interest" description="Allosteric domain" evidence="1">
    <location>
        <begin position="936"/>
        <end position="1077"/>
    </location>
</feature>
<feature type="binding site" evidence="1">
    <location>
        <position position="129"/>
    </location>
    <ligand>
        <name>ATP</name>
        <dbReference type="ChEBI" id="CHEBI:30616"/>
        <label>1</label>
    </ligand>
</feature>
<feature type="binding site" evidence="1">
    <location>
        <position position="169"/>
    </location>
    <ligand>
        <name>ATP</name>
        <dbReference type="ChEBI" id="CHEBI:30616"/>
        <label>1</label>
    </ligand>
</feature>
<feature type="binding site" evidence="1">
    <location>
        <position position="175"/>
    </location>
    <ligand>
        <name>ATP</name>
        <dbReference type="ChEBI" id="CHEBI:30616"/>
        <label>1</label>
    </ligand>
</feature>
<feature type="binding site" evidence="1">
    <location>
        <position position="176"/>
    </location>
    <ligand>
        <name>ATP</name>
        <dbReference type="ChEBI" id="CHEBI:30616"/>
        <label>1</label>
    </ligand>
</feature>
<feature type="binding site" evidence="1">
    <location>
        <position position="208"/>
    </location>
    <ligand>
        <name>ATP</name>
        <dbReference type="ChEBI" id="CHEBI:30616"/>
        <label>1</label>
    </ligand>
</feature>
<feature type="binding site" evidence="1">
    <location>
        <position position="210"/>
    </location>
    <ligand>
        <name>ATP</name>
        <dbReference type="ChEBI" id="CHEBI:30616"/>
        <label>1</label>
    </ligand>
</feature>
<feature type="binding site" evidence="1">
    <location>
        <position position="215"/>
    </location>
    <ligand>
        <name>ATP</name>
        <dbReference type="ChEBI" id="CHEBI:30616"/>
        <label>1</label>
    </ligand>
</feature>
<feature type="binding site" evidence="1">
    <location>
        <position position="241"/>
    </location>
    <ligand>
        <name>ATP</name>
        <dbReference type="ChEBI" id="CHEBI:30616"/>
        <label>1</label>
    </ligand>
</feature>
<feature type="binding site" evidence="1">
    <location>
        <position position="242"/>
    </location>
    <ligand>
        <name>ATP</name>
        <dbReference type="ChEBI" id="CHEBI:30616"/>
        <label>1</label>
    </ligand>
</feature>
<feature type="binding site" evidence="1">
    <location>
        <position position="243"/>
    </location>
    <ligand>
        <name>ATP</name>
        <dbReference type="ChEBI" id="CHEBI:30616"/>
        <label>1</label>
    </ligand>
</feature>
<feature type="binding site" evidence="1">
    <location>
        <position position="285"/>
    </location>
    <ligand>
        <name>ATP</name>
        <dbReference type="ChEBI" id="CHEBI:30616"/>
        <label>1</label>
    </ligand>
</feature>
<feature type="binding site" evidence="1">
    <location>
        <position position="285"/>
    </location>
    <ligand>
        <name>Mg(2+)</name>
        <dbReference type="ChEBI" id="CHEBI:18420"/>
        <label>1</label>
    </ligand>
</feature>
<feature type="binding site" evidence="1">
    <location>
        <position position="285"/>
    </location>
    <ligand>
        <name>Mn(2+)</name>
        <dbReference type="ChEBI" id="CHEBI:29035"/>
        <label>1</label>
    </ligand>
</feature>
<feature type="binding site" evidence="1">
    <location>
        <position position="299"/>
    </location>
    <ligand>
        <name>ATP</name>
        <dbReference type="ChEBI" id="CHEBI:30616"/>
        <label>1</label>
    </ligand>
</feature>
<feature type="binding site" evidence="1">
    <location>
        <position position="299"/>
    </location>
    <ligand>
        <name>Mg(2+)</name>
        <dbReference type="ChEBI" id="CHEBI:18420"/>
        <label>1</label>
    </ligand>
</feature>
<feature type="binding site" evidence="1">
    <location>
        <position position="299"/>
    </location>
    <ligand>
        <name>Mg(2+)</name>
        <dbReference type="ChEBI" id="CHEBI:18420"/>
        <label>2</label>
    </ligand>
</feature>
<feature type="binding site" evidence="1">
    <location>
        <position position="299"/>
    </location>
    <ligand>
        <name>Mn(2+)</name>
        <dbReference type="ChEBI" id="CHEBI:29035"/>
        <label>1</label>
    </ligand>
</feature>
<feature type="binding site" evidence="1">
    <location>
        <position position="299"/>
    </location>
    <ligand>
        <name>Mn(2+)</name>
        <dbReference type="ChEBI" id="CHEBI:29035"/>
        <label>2</label>
    </ligand>
</feature>
<feature type="binding site" evidence="1">
    <location>
        <position position="301"/>
    </location>
    <ligand>
        <name>Mg(2+)</name>
        <dbReference type="ChEBI" id="CHEBI:18420"/>
        <label>2</label>
    </ligand>
</feature>
<feature type="binding site" evidence="1">
    <location>
        <position position="301"/>
    </location>
    <ligand>
        <name>Mn(2+)</name>
        <dbReference type="ChEBI" id="CHEBI:29035"/>
        <label>2</label>
    </ligand>
</feature>
<feature type="binding site" evidence="1">
    <location>
        <position position="714"/>
    </location>
    <ligand>
        <name>ATP</name>
        <dbReference type="ChEBI" id="CHEBI:30616"/>
        <label>2</label>
    </ligand>
</feature>
<feature type="binding site" evidence="1">
    <location>
        <position position="753"/>
    </location>
    <ligand>
        <name>ATP</name>
        <dbReference type="ChEBI" id="CHEBI:30616"/>
        <label>2</label>
    </ligand>
</feature>
<feature type="binding site" evidence="1">
    <location>
        <position position="755"/>
    </location>
    <ligand>
        <name>ATP</name>
        <dbReference type="ChEBI" id="CHEBI:30616"/>
        <label>2</label>
    </ligand>
</feature>
<feature type="binding site" evidence="1">
    <location>
        <position position="760"/>
    </location>
    <ligand>
        <name>ATP</name>
        <dbReference type="ChEBI" id="CHEBI:30616"/>
        <label>2</label>
    </ligand>
</feature>
<feature type="binding site" evidence="1">
    <location>
        <position position="785"/>
    </location>
    <ligand>
        <name>ATP</name>
        <dbReference type="ChEBI" id="CHEBI:30616"/>
        <label>2</label>
    </ligand>
</feature>
<feature type="binding site" evidence="1">
    <location>
        <position position="786"/>
    </location>
    <ligand>
        <name>ATP</name>
        <dbReference type="ChEBI" id="CHEBI:30616"/>
        <label>2</label>
    </ligand>
</feature>
<feature type="binding site" evidence="1">
    <location>
        <position position="787"/>
    </location>
    <ligand>
        <name>ATP</name>
        <dbReference type="ChEBI" id="CHEBI:30616"/>
        <label>2</label>
    </ligand>
</feature>
<feature type="binding site" evidence="1">
    <location>
        <position position="788"/>
    </location>
    <ligand>
        <name>ATP</name>
        <dbReference type="ChEBI" id="CHEBI:30616"/>
        <label>2</label>
    </ligand>
</feature>
<feature type="binding site" evidence="1">
    <location>
        <position position="828"/>
    </location>
    <ligand>
        <name>ATP</name>
        <dbReference type="ChEBI" id="CHEBI:30616"/>
        <label>2</label>
    </ligand>
</feature>
<feature type="binding site" evidence="1">
    <location>
        <position position="828"/>
    </location>
    <ligand>
        <name>Mg(2+)</name>
        <dbReference type="ChEBI" id="CHEBI:18420"/>
        <label>3</label>
    </ligand>
</feature>
<feature type="binding site" evidence="1">
    <location>
        <position position="828"/>
    </location>
    <ligand>
        <name>Mn(2+)</name>
        <dbReference type="ChEBI" id="CHEBI:29035"/>
        <label>3</label>
    </ligand>
</feature>
<feature type="binding site" evidence="1">
    <location>
        <position position="840"/>
    </location>
    <ligand>
        <name>ATP</name>
        <dbReference type="ChEBI" id="CHEBI:30616"/>
        <label>2</label>
    </ligand>
</feature>
<feature type="binding site" evidence="1">
    <location>
        <position position="840"/>
    </location>
    <ligand>
        <name>Mg(2+)</name>
        <dbReference type="ChEBI" id="CHEBI:18420"/>
        <label>3</label>
    </ligand>
</feature>
<feature type="binding site" evidence="1">
    <location>
        <position position="840"/>
    </location>
    <ligand>
        <name>Mg(2+)</name>
        <dbReference type="ChEBI" id="CHEBI:18420"/>
        <label>4</label>
    </ligand>
</feature>
<feature type="binding site" evidence="1">
    <location>
        <position position="840"/>
    </location>
    <ligand>
        <name>Mn(2+)</name>
        <dbReference type="ChEBI" id="CHEBI:29035"/>
        <label>3</label>
    </ligand>
</feature>
<feature type="binding site" evidence="1">
    <location>
        <position position="840"/>
    </location>
    <ligand>
        <name>Mn(2+)</name>
        <dbReference type="ChEBI" id="CHEBI:29035"/>
        <label>4</label>
    </ligand>
</feature>
<feature type="binding site" evidence="1">
    <location>
        <position position="842"/>
    </location>
    <ligand>
        <name>Mg(2+)</name>
        <dbReference type="ChEBI" id="CHEBI:18420"/>
        <label>4</label>
    </ligand>
</feature>
<feature type="binding site" evidence="1">
    <location>
        <position position="842"/>
    </location>
    <ligand>
        <name>Mn(2+)</name>
        <dbReference type="ChEBI" id="CHEBI:29035"/>
        <label>4</label>
    </ligand>
</feature>